<protein>
    <recommendedName>
        <fullName>Uncharacterized protein YAL063C-A</fullName>
    </recommendedName>
</protein>
<reference key="1">
    <citation type="journal article" date="1995" name="Proc. Natl. Acad. Sci. U.S.A.">
        <title>The nucleotide sequence of chromosome I from Saccharomyces cerevisiae.</title>
        <authorList>
            <person name="Bussey H."/>
            <person name="Kaback D.B."/>
            <person name="Zhong W.-W."/>
            <person name="Vo D.H."/>
            <person name="Clark M.W."/>
            <person name="Fortin N."/>
            <person name="Hall J."/>
            <person name="Ouellette B.F.F."/>
            <person name="Keng T."/>
            <person name="Barton A.B."/>
            <person name="Su Y."/>
            <person name="Davies C.J."/>
            <person name="Storms R.K."/>
        </authorList>
    </citation>
    <scope>NUCLEOTIDE SEQUENCE [LARGE SCALE GENOMIC DNA]</scope>
    <source>
        <strain>ATCC 204508 / S288c</strain>
    </source>
</reference>
<reference key="2">
    <citation type="journal article" date="2014" name="G3 (Bethesda)">
        <title>The reference genome sequence of Saccharomyces cerevisiae: Then and now.</title>
        <authorList>
            <person name="Engel S.R."/>
            <person name="Dietrich F.S."/>
            <person name="Fisk D.G."/>
            <person name="Binkley G."/>
            <person name="Balakrishnan R."/>
            <person name="Costanzo M.C."/>
            <person name="Dwight S.S."/>
            <person name="Hitz B.C."/>
            <person name="Karra K."/>
            <person name="Nash R.S."/>
            <person name="Weng S."/>
            <person name="Wong E.D."/>
            <person name="Lloyd P."/>
            <person name="Skrzypek M.S."/>
            <person name="Miyasato S.R."/>
            <person name="Simison M."/>
            <person name="Cherry J.M."/>
        </authorList>
    </citation>
    <scope>GENOME REANNOTATION</scope>
    <source>
        <strain>ATCC 204508 / S288c</strain>
    </source>
</reference>
<reference key="3">
    <citation type="journal article" date="2002" name="Genome Res.">
        <title>Parallel identification of new genes in Saccharomyces cerevisiae.</title>
        <authorList>
            <person name="Oshiro G."/>
            <person name="Wodicka L.M."/>
            <person name="Washburn M.P."/>
            <person name="Yates J.R. III"/>
            <person name="Lockhart D.J."/>
            <person name="Winzeler E.A."/>
        </authorList>
    </citation>
    <scope>IDENTIFICATION BY MASS SPECTROMETRY</scope>
</reference>
<accession>Q3E791</accession>
<accession>D6VPF5</accession>
<feature type="chain" id="PRO_0000248428" description="Uncharacterized protein YAL063C-A">
    <location>
        <begin position="1"/>
        <end position="96"/>
    </location>
</feature>
<gene>
    <name type="ordered locus">YAL063C-A</name>
</gene>
<name>YA063_YEAST</name>
<organism>
    <name type="scientific">Saccharomyces cerevisiae (strain ATCC 204508 / S288c)</name>
    <name type="common">Baker's yeast</name>
    <dbReference type="NCBI Taxonomy" id="559292"/>
    <lineage>
        <taxon>Eukaryota</taxon>
        <taxon>Fungi</taxon>
        <taxon>Dikarya</taxon>
        <taxon>Ascomycota</taxon>
        <taxon>Saccharomycotina</taxon>
        <taxon>Saccharomycetes</taxon>
        <taxon>Saccharomycetales</taxon>
        <taxon>Saccharomycetaceae</taxon>
        <taxon>Saccharomyces</taxon>
    </lineage>
</organism>
<sequence length="96" mass="11308">MCPRTVLLIININHWFYDKNIVRIILTFRLDSGHISDICFINKNLANALITADISLLKRHDIRCTKYIITYYQRYRNKEKGKFISLCKNTIISSSV</sequence>
<keyword id="KW-1185">Reference proteome</keyword>
<dbReference type="EMBL" id="U12980">
    <property type="status" value="NOT_ANNOTATED_CDS"/>
    <property type="molecule type" value="Genomic_DNA"/>
</dbReference>
<dbReference type="EMBL" id="BK006935">
    <property type="protein sequence ID" value="DAA06925.1"/>
    <property type="molecule type" value="Genomic_DNA"/>
</dbReference>
<dbReference type="RefSeq" id="NP_878039.1">
    <property type="nucleotide sequence ID" value="NM_001184642.1"/>
</dbReference>
<dbReference type="BioGRID" id="36969">
    <property type="interactions" value="20"/>
</dbReference>
<dbReference type="FunCoup" id="Q3E791">
    <property type="interactions" value="7"/>
</dbReference>
<dbReference type="IntAct" id="Q3E791">
    <property type="interactions" value="1"/>
</dbReference>
<dbReference type="MINT" id="Q3E791"/>
<dbReference type="PaxDb" id="4932-YAL063C-A"/>
<dbReference type="EnsemblFungi" id="YAL063C-A_mRNA">
    <property type="protein sequence ID" value="YAL063C-A"/>
    <property type="gene ID" value="YAL063C-A"/>
</dbReference>
<dbReference type="GeneID" id="1466427"/>
<dbReference type="KEGG" id="sce:YAL063C-A"/>
<dbReference type="AGR" id="SGD:S000028813"/>
<dbReference type="SGD" id="S000028813">
    <property type="gene designation" value="YAL063C-A"/>
</dbReference>
<dbReference type="VEuPathDB" id="FungiDB:YAL063C-A"/>
<dbReference type="HOGENOM" id="CLU_2361357_0_0_1"/>
<dbReference type="InParanoid" id="Q3E791"/>
<dbReference type="OrthoDB" id="10277186at2759"/>
<dbReference type="BioCyc" id="YEAST:G3O-28905-MONOMER"/>
<dbReference type="PRO" id="PR:Q3E791"/>
<dbReference type="Proteomes" id="UP000002311">
    <property type="component" value="Chromosome I"/>
</dbReference>
<dbReference type="RNAct" id="Q3E791">
    <property type="molecule type" value="protein"/>
</dbReference>
<proteinExistence type="evidence at protein level"/>